<sequence>MMQLKLEHYNIKIGQHKVLLNIVDAKELGVNPGDRVRIRGHQSLSAIVDTTDDMVPPGTLGVFTEVYEHFEDWDKPVEVVPSFRSKSAAVIKKMLDKKPVVQDEIKMLVSDIVDENLSDVELSAFITASYIHGMTDDEVEWLTRAMIDTGDTIEFDTHPIMDKHSIGGVPGNKISLLIVPIVAANGLLIPKTSSRAITGAGGTADLMEVLSPVEFSSQEVKEITEKVGGALVWGGATNIAPADDKLIKIEYPLSIDPYYQMLASIMAKKGAIGADNVVMDIPVGPGTKVPTVQEGQKLARDLINLGHRLGMNVECAITYGSSPIGRRVGPSLEVKEAMKVLESMEGPNSLIEKSAALAGILLEMGGAAPRDQGKELALETLRSGKALEKMKQIIEAQGGDPNIKSDDIQTGQYTADIFASTDGYVMEFDNKWIIEIARLAGAPNDKGAGVAIHKKRGEQVKKGDPILTIYAEKEIKLDNALATAQRTNPIIVEGMLLRRIPGTYGFQ</sequence>
<dbReference type="EC" id="2.4.2.57" evidence="1"/>
<dbReference type="EMBL" id="AE008384">
    <property type="protein sequence ID" value="AAM29783.1"/>
    <property type="molecule type" value="Genomic_DNA"/>
</dbReference>
<dbReference type="SMR" id="Q8Q0P9"/>
<dbReference type="KEGG" id="mma:MM_0087"/>
<dbReference type="PATRIC" id="fig|192952.21.peg.100"/>
<dbReference type="eggNOG" id="arCOG02013">
    <property type="taxonomic scope" value="Archaea"/>
</dbReference>
<dbReference type="HOGENOM" id="CLU_025040_6_0_2"/>
<dbReference type="Proteomes" id="UP000000595">
    <property type="component" value="Chromosome"/>
</dbReference>
<dbReference type="GO" id="GO:0005829">
    <property type="term" value="C:cytosol"/>
    <property type="evidence" value="ECO:0007669"/>
    <property type="project" value="TreeGrafter"/>
</dbReference>
<dbReference type="GO" id="GO:0004645">
    <property type="term" value="F:1,4-alpha-oligoglucan phosphorylase activity"/>
    <property type="evidence" value="ECO:0007669"/>
    <property type="project" value="InterPro"/>
</dbReference>
<dbReference type="GO" id="GO:0016208">
    <property type="term" value="F:AMP binding"/>
    <property type="evidence" value="ECO:0007669"/>
    <property type="project" value="UniProtKB-UniRule"/>
</dbReference>
<dbReference type="GO" id="GO:0016763">
    <property type="term" value="F:pentosyltransferase activity"/>
    <property type="evidence" value="ECO:0007669"/>
    <property type="project" value="UniProtKB-UniRule"/>
</dbReference>
<dbReference type="GO" id="GO:0006196">
    <property type="term" value="P:AMP catabolic process"/>
    <property type="evidence" value="ECO:0007669"/>
    <property type="project" value="UniProtKB-UniRule"/>
</dbReference>
<dbReference type="GO" id="GO:0046125">
    <property type="term" value="P:pyrimidine deoxyribonucleoside metabolic process"/>
    <property type="evidence" value="ECO:0007669"/>
    <property type="project" value="InterPro"/>
</dbReference>
<dbReference type="GO" id="GO:0006206">
    <property type="term" value="P:pyrimidine nucleobase metabolic process"/>
    <property type="evidence" value="ECO:0007669"/>
    <property type="project" value="InterPro"/>
</dbReference>
<dbReference type="CDD" id="cd02775">
    <property type="entry name" value="MopB_CT"/>
    <property type="match status" value="1"/>
</dbReference>
<dbReference type="FunFam" id="3.90.1170.30:FF:000004">
    <property type="entry name" value="AMP phosphorylase"/>
    <property type="match status" value="1"/>
</dbReference>
<dbReference type="Gene3D" id="1.20.970.50">
    <property type="match status" value="1"/>
</dbReference>
<dbReference type="Gene3D" id="2.40.40.20">
    <property type="match status" value="1"/>
</dbReference>
<dbReference type="Gene3D" id="3.40.1030.10">
    <property type="entry name" value="Nucleoside phosphorylase/phosphoribosyltransferase catalytic domain"/>
    <property type="match status" value="1"/>
</dbReference>
<dbReference type="Gene3D" id="3.90.1170.30">
    <property type="entry name" value="Pyrimidine nucleoside phosphorylase-like, C-terminal domain"/>
    <property type="match status" value="1"/>
</dbReference>
<dbReference type="HAMAP" id="MF_02132">
    <property type="entry name" value="AMP_phosphorylase"/>
    <property type="match status" value="1"/>
</dbReference>
<dbReference type="InterPro" id="IPR017713">
    <property type="entry name" value="AMP_phosphorylase"/>
</dbReference>
<dbReference type="InterPro" id="IPR009010">
    <property type="entry name" value="Asp_de-COase-like_dom_sf"/>
</dbReference>
<dbReference type="InterPro" id="IPR000312">
    <property type="entry name" value="Glycosyl_Trfase_fam3"/>
</dbReference>
<dbReference type="InterPro" id="IPR017459">
    <property type="entry name" value="Glycosyl_Trfase_fam3_N_dom"/>
</dbReference>
<dbReference type="InterPro" id="IPR036320">
    <property type="entry name" value="Glycosyl_Trfase_fam3_N_dom_sf"/>
</dbReference>
<dbReference type="InterPro" id="IPR035902">
    <property type="entry name" value="Nuc_phospho_transferase"/>
</dbReference>
<dbReference type="InterPro" id="IPR036566">
    <property type="entry name" value="PYNP-like_C_sf"/>
</dbReference>
<dbReference type="InterPro" id="IPR013102">
    <property type="entry name" value="PYNP_C"/>
</dbReference>
<dbReference type="InterPro" id="IPR017872">
    <property type="entry name" value="Pyrmidine_PPase_CS"/>
</dbReference>
<dbReference type="InterPro" id="IPR013466">
    <property type="entry name" value="Thymidine/AMP_Pase"/>
</dbReference>
<dbReference type="InterPro" id="IPR000053">
    <property type="entry name" value="Thymidine/pyrmidine_PPase"/>
</dbReference>
<dbReference type="NCBIfam" id="TIGR03327">
    <property type="entry name" value="AMP_phos"/>
    <property type="match status" value="1"/>
</dbReference>
<dbReference type="NCBIfam" id="TIGR02645">
    <property type="entry name" value="ARCH_P_rylase"/>
    <property type="match status" value="1"/>
</dbReference>
<dbReference type="NCBIfam" id="NF003338">
    <property type="entry name" value="PRK04350.1"/>
    <property type="match status" value="1"/>
</dbReference>
<dbReference type="PANTHER" id="PTHR10515">
    <property type="entry name" value="THYMIDINE PHOSPHORYLASE"/>
    <property type="match status" value="1"/>
</dbReference>
<dbReference type="PANTHER" id="PTHR10515:SF0">
    <property type="entry name" value="THYMIDINE PHOSPHORYLASE"/>
    <property type="match status" value="1"/>
</dbReference>
<dbReference type="Pfam" id="PF02885">
    <property type="entry name" value="Glycos_trans_3N"/>
    <property type="match status" value="1"/>
</dbReference>
<dbReference type="Pfam" id="PF00591">
    <property type="entry name" value="Glycos_transf_3"/>
    <property type="match status" value="1"/>
</dbReference>
<dbReference type="Pfam" id="PF07831">
    <property type="entry name" value="PYNP_C"/>
    <property type="match status" value="1"/>
</dbReference>
<dbReference type="PIRSF" id="PIRSF000478">
    <property type="entry name" value="TP_PyNP"/>
    <property type="match status" value="1"/>
</dbReference>
<dbReference type="SMART" id="SM00941">
    <property type="entry name" value="PYNP_C"/>
    <property type="match status" value="1"/>
</dbReference>
<dbReference type="SUPFAM" id="SSF50692">
    <property type="entry name" value="ADC-like"/>
    <property type="match status" value="1"/>
</dbReference>
<dbReference type="SUPFAM" id="SSF52418">
    <property type="entry name" value="Nucleoside phosphorylase/phosphoribosyltransferase catalytic domain"/>
    <property type="match status" value="1"/>
</dbReference>
<dbReference type="SUPFAM" id="SSF47648">
    <property type="entry name" value="Nucleoside phosphorylase/phosphoribosyltransferase N-terminal domain"/>
    <property type="match status" value="1"/>
</dbReference>
<dbReference type="SUPFAM" id="SSF54680">
    <property type="entry name" value="Pyrimidine nucleoside phosphorylase C-terminal domain"/>
    <property type="match status" value="1"/>
</dbReference>
<dbReference type="PROSITE" id="PS00647">
    <property type="entry name" value="THYMID_PHOSPHORYLASE"/>
    <property type="match status" value="1"/>
</dbReference>
<protein>
    <recommendedName>
        <fullName evidence="1">AMP phosphorylase</fullName>
        <shortName evidence="1">AMPpase</shortName>
        <ecNumber evidence="1">2.4.2.57</ecNumber>
    </recommendedName>
    <alternativeName>
        <fullName evidence="1">Nucleoside monophosphate phosphorylase</fullName>
        <shortName evidence="1">NMP phosphorylase</shortName>
    </alternativeName>
</protein>
<proteinExistence type="inferred from homology"/>
<gene>
    <name type="ordered locus">MM_0087</name>
</gene>
<keyword id="KW-0328">Glycosyltransferase</keyword>
<keyword id="KW-0808">Transferase</keyword>
<name>AMPPA_METMA</name>
<evidence type="ECO:0000255" key="1">
    <source>
        <dbReference type="HAMAP-Rule" id="MF_02132"/>
    </source>
</evidence>
<organism>
    <name type="scientific">Methanosarcina mazei (strain ATCC BAA-159 / DSM 3647 / Goe1 / Go1 / JCM 11833 / OCM 88)</name>
    <name type="common">Methanosarcina frisia</name>
    <dbReference type="NCBI Taxonomy" id="192952"/>
    <lineage>
        <taxon>Archaea</taxon>
        <taxon>Methanobacteriati</taxon>
        <taxon>Methanobacteriota</taxon>
        <taxon>Stenosarchaea group</taxon>
        <taxon>Methanomicrobia</taxon>
        <taxon>Methanosarcinales</taxon>
        <taxon>Methanosarcinaceae</taxon>
        <taxon>Methanosarcina</taxon>
    </lineage>
</organism>
<comment type="function">
    <text evidence="1">Catalyzes the conversion of AMP and phosphate to adenine and ribose 1,5-bisphosphate (R15P). Exhibits phosphorylase activity toward CMP and UMP in addition to AMP. Functions in an archaeal AMP degradation pathway, together with R15P isomerase and RubisCO.</text>
</comment>
<comment type="catalytic activity">
    <reaction evidence="1">
        <text>AMP + phosphate = alpha-D-ribose 1,5-bisphosphate + adenine</text>
        <dbReference type="Rhea" id="RHEA:36975"/>
        <dbReference type="ChEBI" id="CHEBI:16708"/>
        <dbReference type="ChEBI" id="CHEBI:43474"/>
        <dbReference type="ChEBI" id="CHEBI:68688"/>
        <dbReference type="ChEBI" id="CHEBI:456215"/>
        <dbReference type="EC" id="2.4.2.57"/>
    </reaction>
</comment>
<comment type="catalytic activity">
    <reaction evidence="1">
        <text>CMP + phosphate = cytosine + alpha-D-ribose 1,5-bisphosphate</text>
        <dbReference type="Rhea" id="RHEA:36987"/>
        <dbReference type="ChEBI" id="CHEBI:16040"/>
        <dbReference type="ChEBI" id="CHEBI:43474"/>
        <dbReference type="ChEBI" id="CHEBI:60377"/>
        <dbReference type="ChEBI" id="CHEBI:68688"/>
        <dbReference type="EC" id="2.4.2.57"/>
    </reaction>
</comment>
<comment type="catalytic activity">
    <reaction evidence="1">
        <text>UMP + phosphate = alpha-D-ribose 1,5-bisphosphate + uracil</text>
        <dbReference type="Rhea" id="RHEA:36991"/>
        <dbReference type="ChEBI" id="CHEBI:17568"/>
        <dbReference type="ChEBI" id="CHEBI:43474"/>
        <dbReference type="ChEBI" id="CHEBI:57865"/>
        <dbReference type="ChEBI" id="CHEBI:68688"/>
        <dbReference type="EC" id="2.4.2.57"/>
    </reaction>
</comment>
<comment type="similarity">
    <text evidence="1">Belongs to the thymidine/pyrimidine-nucleoside phosphorylase family. Type 2 subfamily.</text>
</comment>
<reference key="1">
    <citation type="journal article" date="2002" name="J. Mol. Microbiol. Biotechnol.">
        <title>The genome of Methanosarcina mazei: evidence for lateral gene transfer between Bacteria and Archaea.</title>
        <authorList>
            <person name="Deppenmeier U."/>
            <person name="Johann A."/>
            <person name="Hartsch T."/>
            <person name="Merkl R."/>
            <person name="Schmitz R.A."/>
            <person name="Martinez-Arias R."/>
            <person name="Henne A."/>
            <person name="Wiezer A."/>
            <person name="Baeumer S."/>
            <person name="Jacobi C."/>
            <person name="Brueggemann H."/>
            <person name="Lienard T."/>
            <person name="Christmann A."/>
            <person name="Boemecke M."/>
            <person name="Steckel S."/>
            <person name="Bhattacharyya A."/>
            <person name="Lykidis A."/>
            <person name="Overbeek R."/>
            <person name="Klenk H.-P."/>
            <person name="Gunsalus R.P."/>
            <person name="Fritz H.-J."/>
            <person name="Gottschalk G."/>
        </authorList>
    </citation>
    <scope>NUCLEOTIDE SEQUENCE [LARGE SCALE GENOMIC DNA]</scope>
    <source>
        <strain>ATCC BAA-159 / DSM 3647 / Goe1 / Go1 / JCM 11833 / OCM 88</strain>
    </source>
</reference>
<accession>Q8Q0P9</accession>
<feature type="chain" id="PRO_0000059089" description="AMP phosphorylase">
    <location>
        <begin position="1"/>
        <end position="507"/>
    </location>
</feature>
<feature type="active site" description="Proton donor" evidence="1">
    <location>
        <position position="256"/>
    </location>
</feature>
<feature type="binding site" evidence="1">
    <location>
        <position position="168"/>
    </location>
    <ligand>
        <name>AMP</name>
        <dbReference type="ChEBI" id="CHEBI:456215"/>
    </ligand>
</feature>
<feature type="binding site" evidence="1">
    <location>
        <begin position="194"/>
        <end position="199"/>
    </location>
    <ligand>
        <name>AMP</name>
        <dbReference type="ChEBI" id="CHEBI:456215"/>
    </ligand>
</feature>
<feature type="binding site" evidence="1">
    <location>
        <position position="203"/>
    </location>
    <ligand>
        <name>AMP</name>
        <dbReference type="ChEBI" id="CHEBI:456215"/>
    </ligand>
</feature>
<feature type="binding site" evidence="1">
    <location>
        <position position="264"/>
    </location>
    <ligand>
        <name>AMP</name>
        <dbReference type="ChEBI" id="CHEBI:456215"/>
    </ligand>
</feature>
<feature type="binding site" evidence="1">
    <location>
        <position position="288"/>
    </location>
    <ligand>
        <name>AMP</name>
        <dbReference type="ChEBI" id="CHEBI:456215"/>
    </ligand>
</feature>